<geneLocation type="mitochondrion"/>
<protein>
    <recommendedName>
        <fullName>NADH-ubiquinone oxidoreductase chain 6</fullName>
        <ecNumber>7.1.1.2</ecNumber>
    </recommendedName>
    <alternativeName>
        <fullName>NADH dehydrogenase subunit 6</fullName>
    </alternativeName>
</protein>
<sequence length="173" mass="18143">MTYFVVFLGLCFVLGGLAVASNPSPYYGVVGLVLASVAGCGWLLSLGVSFVSLVLFMVYLGGMLVVFVYSVSLAADPFPEAWGDWGVVGYGMSFIVVLVVGVVVGGFVEGWDFGVVTVDSAGVFFARLDFSGVAMFYSCGVGMFLVAGWGLLLTLFVVLELVRGLSRGAIRAV</sequence>
<keyword id="KW-0249">Electron transport</keyword>
<keyword id="KW-0472">Membrane</keyword>
<keyword id="KW-0496">Mitochondrion</keyword>
<keyword id="KW-0520">NAD</keyword>
<keyword id="KW-0679">Respiratory chain</keyword>
<keyword id="KW-1278">Translocase</keyword>
<keyword id="KW-0812">Transmembrane</keyword>
<keyword id="KW-1133">Transmembrane helix</keyword>
<keyword id="KW-0813">Transport</keyword>
<keyword id="KW-0830">Ubiquinone</keyword>
<name>NU6M_CEPGR</name>
<accession>P43198</accession>
<feature type="chain" id="PRO_0000118263" description="NADH-ubiquinone oxidoreductase chain 6">
    <location>
        <begin position="1"/>
        <end position="173"/>
    </location>
</feature>
<feature type="transmembrane region" description="Helical" evidence="2">
    <location>
        <begin position="1"/>
        <end position="21"/>
    </location>
</feature>
<feature type="transmembrane region" description="Helical" evidence="2">
    <location>
        <begin position="27"/>
        <end position="47"/>
    </location>
</feature>
<feature type="transmembrane region" description="Helical" evidence="2">
    <location>
        <begin position="48"/>
        <end position="68"/>
    </location>
</feature>
<feature type="transmembrane region" description="Helical" evidence="2">
    <location>
        <begin position="87"/>
        <end position="107"/>
    </location>
</feature>
<feature type="transmembrane region" description="Helical" evidence="2">
    <location>
        <begin position="113"/>
        <end position="133"/>
    </location>
</feature>
<feature type="transmembrane region" description="Helical" evidence="2">
    <location>
        <begin position="139"/>
        <end position="159"/>
    </location>
</feature>
<gene>
    <name type="primary">MT-ND6</name>
    <name type="synonym">MTND6</name>
    <name type="synonym">NADH6</name>
    <name type="synonym">ND6</name>
</gene>
<reference key="1">
    <citation type="journal article" date="1994" name="Curr. Genet.">
        <title>Intragenic rearrangements in the mitochondrial NADH dehydrogenase subunit 6 gene of vertebrates.</title>
        <authorList>
            <person name="Moum T."/>
            <person name="Willassen N.P."/>
            <person name="Johansen S."/>
        </authorList>
    </citation>
    <scope>NUCLEOTIDE SEQUENCE [GENOMIC DNA]</scope>
</reference>
<organism>
    <name type="scientific">Cepphus grylle</name>
    <name type="common">Black guillemot</name>
    <name type="synonym">Alca grylle</name>
    <dbReference type="NCBI Taxonomy" id="28697"/>
    <lineage>
        <taxon>Eukaryota</taxon>
        <taxon>Metazoa</taxon>
        <taxon>Chordata</taxon>
        <taxon>Craniata</taxon>
        <taxon>Vertebrata</taxon>
        <taxon>Euteleostomi</taxon>
        <taxon>Archelosauria</taxon>
        <taxon>Archosauria</taxon>
        <taxon>Dinosauria</taxon>
        <taxon>Saurischia</taxon>
        <taxon>Theropoda</taxon>
        <taxon>Coelurosauria</taxon>
        <taxon>Aves</taxon>
        <taxon>Neognathae</taxon>
        <taxon>Neoaves</taxon>
        <taxon>Charadriiformes</taxon>
        <taxon>Alcidae</taxon>
        <taxon>Cepphus</taxon>
    </lineage>
</organism>
<comment type="function">
    <text evidence="1">Core subunit of the mitochondrial membrane respiratory chain NADH dehydrogenase (Complex I) that is believed to belong to the minimal assembly required for catalysis. Complex I functions in the transfer of electrons from NADH to the respiratory chain. The immediate electron acceptor for the enzyme is believed to be ubiquinone (By similarity).</text>
</comment>
<comment type="catalytic activity">
    <reaction>
        <text>a ubiquinone + NADH + 5 H(+)(in) = a ubiquinol + NAD(+) + 4 H(+)(out)</text>
        <dbReference type="Rhea" id="RHEA:29091"/>
        <dbReference type="Rhea" id="RHEA-COMP:9565"/>
        <dbReference type="Rhea" id="RHEA-COMP:9566"/>
        <dbReference type="ChEBI" id="CHEBI:15378"/>
        <dbReference type="ChEBI" id="CHEBI:16389"/>
        <dbReference type="ChEBI" id="CHEBI:17976"/>
        <dbReference type="ChEBI" id="CHEBI:57540"/>
        <dbReference type="ChEBI" id="CHEBI:57945"/>
        <dbReference type="EC" id="7.1.1.2"/>
    </reaction>
</comment>
<comment type="subcellular location">
    <subcellularLocation>
        <location evidence="3">Mitochondrion membrane</location>
        <topology evidence="3">Multi-pass membrane protein</topology>
    </subcellularLocation>
</comment>
<comment type="similarity">
    <text evidence="3">Belongs to the complex I subunit 6 family.</text>
</comment>
<dbReference type="EC" id="7.1.1.2"/>
<dbReference type="EMBL" id="X73917">
    <property type="protein sequence ID" value="CAA52122.1"/>
    <property type="molecule type" value="Genomic_DNA"/>
</dbReference>
<dbReference type="PIR" id="S44398">
    <property type="entry name" value="S44398"/>
</dbReference>
<dbReference type="SMR" id="P43198"/>
<dbReference type="GO" id="GO:0031966">
    <property type="term" value="C:mitochondrial membrane"/>
    <property type="evidence" value="ECO:0007669"/>
    <property type="project" value="UniProtKB-SubCell"/>
</dbReference>
<dbReference type="GO" id="GO:0008137">
    <property type="term" value="F:NADH dehydrogenase (ubiquinone) activity"/>
    <property type="evidence" value="ECO:0007669"/>
    <property type="project" value="UniProtKB-EC"/>
</dbReference>
<dbReference type="Gene3D" id="1.20.120.1200">
    <property type="entry name" value="NADH-ubiquinone/plastoquinone oxidoreductase chain 6, subunit NuoJ"/>
    <property type="match status" value="1"/>
</dbReference>
<dbReference type="InterPro" id="IPR050269">
    <property type="entry name" value="ComplexI_Subunit6"/>
</dbReference>
<dbReference type="InterPro" id="IPR001457">
    <property type="entry name" value="NADH_UbQ/plastoQ_OxRdtase_su6"/>
</dbReference>
<dbReference type="InterPro" id="IPR042106">
    <property type="entry name" value="Nuo/plastoQ_OxRdtase_6_NuoJ"/>
</dbReference>
<dbReference type="PANTHER" id="PTHR11435">
    <property type="entry name" value="NADH UBIQUINONE OXIDOREDUCTASE SUBUNIT ND6"/>
    <property type="match status" value="1"/>
</dbReference>
<dbReference type="PANTHER" id="PTHR11435:SF1">
    <property type="entry name" value="NADH-UBIQUINONE OXIDOREDUCTASE CHAIN 6"/>
    <property type="match status" value="1"/>
</dbReference>
<dbReference type="Pfam" id="PF00499">
    <property type="entry name" value="Oxidored_q3"/>
    <property type="match status" value="1"/>
</dbReference>
<proteinExistence type="inferred from homology"/>
<evidence type="ECO:0000250" key="1"/>
<evidence type="ECO:0000255" key="2"/>
<evidence type="ECO:0000305" key="3"/>